<reference key="1">
    <citation type="journal article" date="2006" name="Biochem. J.">
        <title>Molecular cloning of disintegrins from Cerastes vipera and Macrovipera lebetina transmediterranea venom gland cDNA libraries: insight into the evolution of the snake venom integrin-inhibition system.</title>
        <authorList>
            <person name="Sanz L."/>
            <person name="Bazaa A."/>
            <person name="Marrakchi N."/>
            <person name="Perez A."/>
            <person name="Chenik M."/>
            <person name="Bel Lasfer Z."/>
            <person name="El Ayeb M."/>
            <person name="Calvete J.J."/>
        </authorList>
    </citation>
    <scope>NUCLEOTIDE SEQUENCE [MRNA]</scope>
    <source>
        <tissue>Venom gland</tissue>
    </source>
</reference>
<reference key="2">
    <citation type="journal article" date="2005" name="Lab. Invest.">
        <title>Lebestatin, a disintegrin from Macrovipera venom, inhibits integrin-mediated cell adhesion, migration and angiogenesis.</title>
        <authorList>
            <person name="Kallech-Ziri O."/>
            <person name="Luis J."/>
            <person name="Daoud S."/>
            <person name="Bazaa A."/>
            <person name="Srairi Abid N."/>
            <person name="Andreotti N."/>
            <person name="Lehmann M."/>
            <person name="Zouari R."/>
            <person name="Mabrouk K."/>
            <person name="Marvaldi J."/>
            <person name="Sabatier J.-M."/>
            <person name="El Ayeb M."/>
            <person name="Marrakchi N."/>
        </authorList>
    </citation>
    <scope>PROTEIN SEQUENCE OF 65-105</scope>
    <scope>FUNCTION</scope>
    <scope>SUBUNIT</scope>
    <scope>SUBCELLULAR LOCATION</scope>
    <scope>MASS SPECTROMETRY</scope>
    <source>
        <tissue>Venom</tissue>
    </source>
</reference>
<reference key="3">
    <citation type="journal article" date="2005" name="Proteomics">
        <title>Snake venomics: comparative analysis of the venom proteomes of the Tunisian snakes Cerastes cerastes, Cerastes vipera and Macrovipera lebetina.</title>
        <authorList>
            <person name="Bazaa A."/>
            <person name="Marrakchi N."/>
            <person name="El Ayeb M."/>
            <person name="Sanz L."/>
            <person name="Calvete J.J."/>
        </authorList>
    </citation>
    <scope>PROTEIN SEQUENCE OF 65-76</scope>
    <scope>SUBCELLULAR LOCATION</scope>
    <scope>MASS SPECTROMETRY</scope>
    <source>
        <tissue>Venom</tissue>
    </source>
</reference>
<proteinExistence type="evidence at protein level"/>
<sequence>MIQVLLVIICLAVFPFQGSSKTLKSGNVNDYEVVNPGTVTGLPKGAVEEKHEPMKGNTLQKFPLCTTGPCCRQCKLKPAGTTCWKTSRTSHYCTGKSCDCPSYPGNG</sequence>
<evidence type="ECO:0000250" key="1">
    <source>
        <dbReference type="UniProtKB" id="Q7ZZM2"/>
    </source>
</evidence>
<evidence type="ECO:0000255" key="2"/>
<evidence type="ECO:0000269" key="3">
    <source>
    </source>
</evidence>
<evidence type="ECO:0000269" key="4">
    <source>
    </source>
</evidence>
<evidence type="ECO:0000303" key="5">
    <source>
    </source>
</evidence>
<evidence type="ECO:0000305" key="6"/>
<evidence type="ECO:0000305" key="7">
    <source>
    </source>
</evidence>
<evidence type="ECO:0000305" key="8">
    <source>
    </source>
</evidence>
<keyword id="KW-0037">Angiogenesis</keyword>
<keyword id="KW-1217">Cell adhesion impairing toxin</keyword>
<keyword id="KW-0217">Developmental protein</keyword>
<keyword id="KW-0221">Differentiation</keyword>
<keyword id="KW-0903">Direct protein sequencing</keyword>
<keyword id="KW-1015">Disulfide bond</keyword>
<keyword id="KW-0964">Secreted</keyword>
<keyword id="KW-0732">Signal</keyword>
<keyword id="KW-0800">Toxin</keyword>
<feature type="signal peptide" evidence="2">
    <location>
        <begin position="1"/>
        <end position="20"/>
    </location>
</feature>
<feature type="propeptide" id="PRO_0000318187" evidence="7">
    <location>
        <begin position="21"/>
        <end position="64"/>
    </location>
</feature>
<feature type="chain" id="PRO_0000318188" description="Disintegrin lebestatin" evidence="3">
    <location>
        <begin position="65"/>
        <end position="105"/>
    </location>
</feature>
<feature type="propeptide" id="PRO_0000318189" evidence="7">
    <location>
        <begin position="106"/>
        <end position="107"/>
    </location>
</feature>
<feature type="domain" description="Disintegrin">
    <location>
        <begin position="65"/>
        <end position="105"/>
    </location>
</feature>
<feature type="short sequence motif" description="Cell attachment site; atypical (KTS)">
    <location>
        <begin position="85"/>
        <end position="87"/>
    </location>
</feature>
<feature type="disulfide bond" evidence="1">
    <location>
        <begin position="65"/>
        <end position="74"/>
    </location>
</feature>
<feature type="disulfide bond" evidence="1">
    <location>
        <begin position="70"/>
        <end position="93"/>
    </location>
</feature>
<feature type="disulfide bond" evidence="1">
    <location>
        <begin position="71"/>
        <end position="98"/>
    </location>
</feature>
<feature type="disulfide bond" evidence="1">
    <location>
        <begin position="83"/>
        <end position="100"/>
    </location>
</feature>
<organism>
    <name type="scientific">Macrovipera lebetinus</name>
    <name type="common">Levantine viper</name>
    <name type="synonym">Vipera lebetina</name>
    <dbReference type="NCBI Taxonomy" id="3148341"/>
    <lineage>
        <taxon>Eukaryota</taxon>
        <taxon>Metazoa</taxon>
        <taxon>Chordata</taxon>
        <taxon>Craniata</taxon>
        <taxon>Vertebrata</taxon>
        <taxon>Euteleostomi</taxon>
        <taxon>Lepidosauria</taxon>
        <taxon>Squamata</taxon>
        <taxon>Bifurcata</taxon>
        <taxon>Unidentata</taxon>
        <taxon>Episquamata</taxon>
        <taxon>Toxicofera</taxon>
        <taxon>Serpentes</taxon>
        <taxon>Colubroidea</taxon>
        <taxon>Viperidae</taxon>
        <taxon>Viperinae</taxon>
        <taxon>Macrovipera</taxon>
    </lineage>
</organism>
<name>DIS_MACLB</name>
<protein>
    <recommendedName>
        <fullName evidence="5">Disintegrin lebestatin</fullName>
    </recommendedName>
    <alternativeName>
        <fullName>ML-(6,9,10)</fullName>
    </alternativeName>
    <alternativeName>
        <fullName>ML-4</fullName>
    </alternativeName>
</protein>
<dbReference type="EMBL" id="AM114015">
    <property type="protein sequence ID" value="CAJ34939.1"/>
    <property type="molecule type" value="mRNA"/>
</dbReference>
<dbReference type="SMR" id="Q3BK14"/>
<dbReference type="GO" id="GO:0005576">
    <property type="term" value="C:extracellular region"/>
    <property type="evidence" value="ECO:0007669"/>
    <property type="project" value="UniProtKB-SubCell"/>
</dbReference>
<dbReference type="GO" id="GO:0090729">
    <property type="term" value="F:toxin activity"/>
    <property type="evidence" value="ECO:0007669"/>
    <property type="project" value="UniProtKB-KW"/>
</dbReference>
<dbReference type="GO" id="GO:0001525">
    <property type="term" value="P:angiogenesis"/>
    <property type="evidence" value="ECO:0007669"/>
    <property type="project" value="UniProtKB-KW"/>
</dbReference>
<dbReference type="GO" id="GO:0030154">
    <property type="term" value="P:cell differentiation"/>
    <property type="evidence" value="ECO:0007669"/>
    <property type="project" value="UniProtKB-KW"/>
</dbReference>
<dbReference type="Gene3D" id="4.10.70.10">
    <property type="entry name" value="Disintegrin domain"/>
    <property type="match status" value="1"/>
</dbReference>
<dbReference type="InterPro" id="IPR036436">
    <property type="entry name" value="Disintegrin_dom_sf"/>
</dbReference>
<dbReference type="SUPFAM" id="SSF57552">
    <property type="entry name" value="Blood coagulation inhibitor (disintegrin)"/>
    <property type="match status" value="1"/>
</dbReference>
<accession>Q3BK14</accession>
<comment type="function">
    <text evidence="3">Specifically interacts with the alpha-1/beta-1 integrin (ITGA1/ITGB1). Exhibits highly inhibitory effects on cell adhesion and cell migration to collagens I and IV. Also shows in vivo anti-angiogenic activity.</text>
</comment>
<comment type="subunit">
    <text evidence="3">Monomer.</text>
</comment>
<comment type="subcellular location">
    <subcellularLocation>
        <location evidence="3 4">Secreted</location>
    </subcellularLocation>
</comment>
<comment type="tissue specificity">
    <text evidence="7 8">Expressed by the venom gland.</text>
</comment>
<comment type="mass spectrometry"/>
<comment type="mass spectrometry"/>
<comment type="similarity">
    <text evidence="6">Belongs to the disintegrin family. Short disintegrin subfamily.</text>
</comment>